<feature type="chain" id="PRO_0000317808" description="Autophagy-related protein 2">
    <location>
        <begin position="1"/>
        <end position="2100"/>
    </location>
</feature>
<feature type="region of interest" description="Disordered" evidence="3">
    <location>
        <begin position="101"/>
        <end position="129"/>
    </location>
</feature>
<feature type="region of interest" description="Disordered" evidence="3">
    <location>
        <begin position="288"/>
        <end position="363"/>
    </location>
</feature>
<feature type="region of interest" description="Disordered" evidence="3">
    <location>
        <begin position="410"/>
        <end position="492"/>
    </location>
</feature>
<feature type="region of interest" description="Disordered" evidence="3">
    <location>
        <begin position="512"/>
        <end position="588"/>
    </location>
</feature>
<feature type="region of interest" description="Disordered" evidence="3">
    <location>
        <begin position="674"/>
        <end position="694"/>
    </location>
</feature>
<feature type="region of interest" description="Disordered" evidence="3">
    <location>
        <begin position="1474"/>
        <end position="1499"/>
    </location>
</feature>
<feature type="region of interest" description="Disordered" evidence="3">
    <location>
        <begin position="1969"/>
        <end position="1996"/>
    </location>
</feature>
<feature type="compositionally biased region" description="Low complexity" evidence="3">
    <location>
        <begin position="300"/>
        <end position="320"/>
    </location>
</feature>
<feature type="compositionally biased region" description="Basic and acidic residues" evidence="3">
    <location>
        <begin position="335"/>
        <end position="346"/>
    </location>
</feature>
<feature type="compositionally biased region" description="Polar residues" evidence="3">
    <location>
        <begin position="462"/>
        <end position="485"/>
    </location>
</feature>
<feature type="compositionally biased region" description="Low complexity" evidence="3">
    <location>
        <begin position="512"/>
        <end position="522"/>
    </location>
</feature>
<feature type="compositionally biased region" description="Basic and acidic residues" evidence="3">
    <location>
        <begin position="535"/>
        <end position="546"/>
    </location>
</feature>
<feature type="compositionally biased region" description="Basic and acidic residues" evidence="3">
    <location>
        <begin position="555"/>
        <end position="565"/>
    </location>
</feature>
<feature type="compositionally biased region" description="Low complexity" evidence="3">
    <location>
        <begin position="1973"/>
        <end position="1985"/>
    </location>
</feature>
<feature type="compositionally biased region" description="Basic and acidic residues" evidence="3">
    <location>
        <begin position="1986"/>
        <end position="1996"/>
    </location>
</feature>
<gene>
    <name type="primary">ATG2</name>
    <name type="ORF">CIMG_01661</name>
</gene>
<dbReference type="EMBL" id="GG704911">
    <property type="protein sequence ID" value="EAS36307.3"/>
    <property type="molecule type" value="Genomic_DNA"/>
</dbReference>
<dbReference type="RefSeq" id="XP_001247890.1">
    <property type="nucleotide sequence ID" value="XM_001247889.2"/>
</dbReference>
<dbReference type="STRING" id="246410.Q1E702"/>
<dbReference type="GeneID" id="4567148"/>
<dbReference type="KEGG" id="cim:CIMG_01661"/>
<dbReference type="VEuPathDB" id="FungiDB:CIMG_01661"/>
<dbReference type="InParanoid" id="Q1E702"/>
<dbReference type="OMA" id="AVWKRAP"/>
<dbReference type="OrthoDB" id="18982at2759"/>
<dbReference type="Proteomes" id="UP000001261">
    <property type="component" value="Unassembled WGS sequence"/>
</dbReference>
<dbReference type="GO" id="GO:0005789">
    <property type="term" value="C:endoplasmic reticulum membrane"/>
    <property type="evidence" value="ECO:0007669"/>
    <property type="project" value="UniProtKB-SubCell"/>
</dbReference>
<dbReference type="GO" id="GO:0061908">
    <property type="term" value="C:phagophore"/>
    <property type="evidence" value="ECO:0007669"/>
    <property type="project" value="TreeGrafter"/>
</dbReference>
<dbReference type="GO" id="GO:0034045">
    <property type="term" value="C:phagophore assembly site membrane"/>
    <property type="evidence" value="ECO:0007669"/>
    <property type="project" value="UniProtKB-SubCell"/>
</dbReference>
<dbReference type="GO" id="GO:0032266">
    <property type="term" value="F:phosphatidylinositol-3-phosphate binding"/>
    <property type="evidence" value="ECO:0007669"/>
    <property type="project" value="TreeGrafter"/>
</dbReference>
<dbReference type="GO" id="GO:0043495">
    <property type="term" value="F:protein-membrane adaptor activity"/>
    <property type="evidence" value="ECO:0007669"/>
    <property type="project" value="TreeGrafter"/>
</dbReference>
<dbReference type="GO" id="GO:0000045">
    <property type="term" value="P:autophagosome assembly"/>
    <property type="evidence" value="ECO:0007669"/>
    <property type="project" value="TreeGrafter"/>
</dbReference>
<dbReference type="GO" id="GO:0000422">
    <property type="term" value="P:autophagy of mitochondrion"/>
    <property type="evidence" value="ECO:0007669"/>
    <property type="project" value="TreeGrafter"/>
</dbReference>
<dbReference type="GO" id="GO:0061723">
    <property type="term" value="P:glycophagy"/>
    <property type="evidence" value="ECO:0007669"/>
    <property type="project" value="TreeGrafter"/>
</dbReference>
<dbReference type="GO" id="GO:0006869">
    <property type="term" value="P:lipid transport"/>
    <property type="evidence" value="ECO:0007669"/>
    <property type="project" value="UniProtKB-KW"/>
</dbReference>
<dbReference type="GO" id="GO:0034727">
    <property type="term" value="P:piecemeal microautophagy of the nucleus"/>
    <property type="evidence" value="ECO:0007669"/>
    <property type="project" value="TreeGrafter"/>
</dbReference>
<dbReference type="GO" id="GO:0015031">
    <property type="term" value="P:protein transport"/>
    <property type="evidence" value="ECO:0007669"/>
    <property type="project" value="UniProtKB-KW"/>
</dbReference>
<dbReference type="GO" id="GO:0061709">
    <property type="term" value="P:reticulophagy"/>
    <property type="evidence" value="ECO:0007669"/>
    <property type="project" value="TreeGrafter"/>
</dbReference>
<dbReference type="InterPro" id="IPR026849">
    <property type="entry name" value="ATG2"/>
</dbReference>
<dbReference type="PANTHER" id="PTHR13190">
    <property type="entry name" value="AUTOPHAGY-RELATED 2, ISOFORM A"/>
    <property type="match status" value="1"/>
</dbReference>
<dbReference type="PANTHER" id="PTHR13190:SF1">
    <property type="entry name" value="AUTOPHAGY-RELATED 2, ISOFORM A"/>
    <property type="match status" value="1"/>
</dbReference>
<dbReference type="Pfam" id="PF13329">
    <property type="entry name" value="ATG2_CAD"/>
    <property type="match status" value="1"/>
</dbReference>
<name>ATG2_COCIM</name>
<protein>
    <recommendedName>
        <fullName>Autophagy-related protein 2</fullName>
    </recommendedName>
</protein>
<comment type="function">
    <text evidence="2">Lipid transfer protein required for autophagosome completion and peroxisome degradation. Tethers the edge of the isolation membrane (IM) to the endoplasmic reticulum (ER) and mediates direct lipid transfer from ER to IM for IM expansion. ATG2 binds to the ER exit site (ERES), which is the membrane source for autophagosome formation, using basic residues in its N-terminal region (NR) and to the expanding edge of the IM through its C-terminal region. The latter binding is assisted by an ATG18-PtdIns3P interaction. ATG2 then extracts phospholipids from the membrane source using its NR and transfers them to ATG9 to the IM through its predicted beta-sheet-rich structure for membrane expansion.</text>
</comment>
<comment type="catalytic activity">
    <reaction evidence="1">
        <text>a 1,2-diacyl-sn-glycero-3-phosphocholine(in) = a 1,2-diacyl-sn-glycero-3-phosphocholine(out)</text>
        <dbReference type="Rhea" id="RHEA:38571"/>
        <dbReference type="ChEBI" id="CHEBI:57643"/>
    </reaction>
</comment>
<comment type="catalytic activity">
    <reaction evidence="1">
        <text>a 1,2-diacyl-sn-glycero-3-phospho-L-serine(in) = a 1,2-diacyl-sn-glycero-3-phospho-L-serine(out)</text>
        <dbReference type="Rhea" id="RHEA:38663"/>
        <dbReference type="ChEBI" id="CHEBI:57262"/>
    </reaction>
</comment>
<comment type="catalytic activity">
    <reaction evidence="1">
        <text>a 1,2-diacyl-sn-glycero-3-phosphoethanolamine(in) = a 1,2-diacyl-sn-glycero-3-phosphoethanolamine(out)</text>
        <dbReference type="Rhea" id="RHEA:38895"/>
        <dbReference type="ChEBI" id="CHEBI:64612"/>
    </reaction>
</comment>
<comment type="subcellular location">
    <subcellularLocation>
        <location evidence="2">Preautophagosomal structure membrane</location>
        <topology evidence="2">Peripheral membrane protein</topology>
    </subcellularLocation>
    <subcellularLocation>
        <location evidence="2">Endoplasmic reticulum membrane</location>
        <topology evidence="2">Peripheral membrane protein</topology>
    </subcellularLocation>
</comment>
<comment type="similarity">
    <text evidence="4">Belongs to the ATG2 family.</text>
</comment>
<sequence length="2100" mass="229993">MPFSLPSFAQKLVLRYALSRLGLVDTDTLDLATLGITWGQRSTFELRNVGLKLEKLSAHLPPYCTLTKGSVSLLRVTVPANLHNSSIIVEVDGVDARVRLLPDKPEQNAPPTRSKGTAEDEGQDGHSVLPSTADLAQSFLESEPKEETEELQAAILSQSQYPEHLDAQSDDGEEDLGLYDGLSLPAFIAGFLKGVIDRLQLNIANVSLRVDTEVQRDGVLKDETQDPISGLFTIQEIAIDSTATSASEDSRLKIGKRMVSLSGIHAMIMSDAEVFSNYSRFNAPDIPSTVHSKSTHTPLRPRSPQPSSSGSDSCGDMSRSTILDPSSMYGSRLTVDSHGDESRHLESSVYSTTGRFSDADSDDENDLEFYSQATTGMLDSHYDERLLDNPAYLDEALKSQFDDHLEDSTIFPKDCPSTPVRDQTPRPHVSKSPSSSPEHYMYHSVHESNFPVGGGIRDNEPDSATSARGKTPDCQTEQESPSTSKICPAVSQPEDLSASRIFTHEEAQSMYMSAMSQSSTTSFDPDMPGAWGSSKRIDTSDPDQKEQPLSGDTDTEAKGASHDFDTSQNSPEAQTGEDDERESVHNSPQYISGVVKEILAIDRIIIWLPSVDSQDSEEIPKTDIDSKPVDPMVESTITLADSVTPDLLANTRSRLAQSAFRRGSVSSIVSSRHLPISRTKPTTQKHEDFDGLNDPQTTRAVEIDITSLTAKLDIASGWLLVKIGQRITDVSTSTSKQTKISEAASEESSPSFFRLNLTSCSLKFLERVPAQPYPLSSAPSLSQLQSGIPIEETILHLTLSGTSIDFAAIGNTTKLRLDVMKFVLGHMSYDIISFDESLRMRESTRDVTSPGQKDISLRVIKSSESTTVNLTTLPICLSLDLQELDETLGWFGGLSTVLELGSSIASASTVKGEQPCSPPRPRRGVHFADPVPPSSPSTTNHAALKANCRIGGIVLRVIGEHCTVQLGTTAAKLVSRFEGIALQIDKASVGGPHLRKEPSPSPPSLDFENIRFEYLYGPKEVDLDRLLGLLTPSKDKFDEDDDIMLDTLFRQRRQGAVLRLTVGHADFAVPNPTALQPLSHLGEELAKLATVAKYLPQDDRPGILILALVREFEGRVHVNNEAGDITIISHNLEAGYVTFPSLLATRISTVTVVRNGSEELVAEVIPEDTEEARTHDPLPMIMARFIADEMEPTVKIKLYNVRVEYTVPSITAFLGLNNQMAAEDVAANMAQSVLNLADLKAHHEPGSDLSERDSIGSGDDRSAMLPRLSVGMKDCGIGLNPRKSPAKALVIFTRASFSGALHETKPSEALLDIRKASVMIIDNVENLGSAENYRHRMSSGARSGQIQHLQSIGFVPVCDISSASVALKVMQLDVEGEKSLDIEVRDDLLVLETCADSTQTLISILSGLAPLSPPITERKYRTEVIRIEDMLNSLSGDAFATDIVPDSDYEVEGENDGQDGDGAEEIEYVSVFYPSHGDSGPQGRGATTPRFGNEGSASAGTSRILGSFHSEAQMSSSIPELEFQEDHFAKQSAVGDTAHRWDSSRNTYTLATEVKLRDSPLRIRVRDVHVIWNLYDGYDWQRTRDTISKAVRDVQAKAAEKFARRPGNRLSADFEEDEESVIGDFLFNSVYIGIPANRDPRELSHDINRNIDDLASETMSFATSTTVTGLQNQVPGTKREKLRLARSKHHKMTFELKGISADLIVFPPHSGETQSSLDIRVEDLEIFDHIPTSTWKKFATYMRDVGEREIGTSMVHLEILNVKPVPDLAASEVVLKATVLPLRLHVDQDALDFLSRFFEFKDDSAPSEPSPEDVPFLQRAEVNAIRVRLDFKPKRVDYAGLRSGRTTEFMNFFVLDEADMVLQHVIIYGVSGFDRLGRTLNDIWMPDIKANQLPTVLAGIAPVRSLVNIGGGVKDLVLVPMREYKKDGRIVRSIQKGAVQFAKTTTNELLRFGAKLAIGTQTALQSAEDFLNSPRGSPSRPSTSDGRWDDNGVDEGERPRISLYADQPLGVAQGLRGAYSSLERDILMTRDAIVAMPSEVLESGSATEAARRLLGRTPTVVLRPAIGASKAVSQTLLGVSNALDPKNRRKIDDKYKKHKV</sequence>
<accession>Q1E702</accession>
<accession>J3KJZ4</accession>
<proteinExistence type="inferred from homology"/>
<keyword id="KW-0072">Autophagy</keyword>
<keyword id="KW-0256">Endoplasmic reticulum</keyword>
<keyword id="KW-0445">Lipid transport</keyword>
<keyword id="KW-0472">Membrane</keyword>
<keyword id="KW-0653">Protein transport</keyword>
<keyword id="KW-1185">Reference proteome</keyword>
<keyword id="KW-0813">Transport</keyword>
<evidence type="ECO:0000250" key="1">
    <source>
        <dbReference type="UniProtKB" id="O94649"/>
    </source>
</evidence>
<evidence type="ECO:0000250" key="2">
    <source>
        <dbReference type="UniProtKB" id="P53855"/>
    </source>
</evidence>
<evidence type="ECO:0000256" key="3">
    <source>
        <dbReference type="SAM" id="MobiDB-lite"/>
    </source>
</evidence>
<evidence type="ECO:0000305" key="4"/>
<reference key="1">
    <citation type="journal article" date="2009" name="Genome Res.">
        <title>Comparative genomic analyses of the human fungal pathogens Coccidioides and their relatives.</title>
        <authorList>
            <person name="Sharpton T.J."/>
            <person name="Stajich J.E."/>
            <person name="Rounsley S.D."/>
            <person name="Gardner M.J."/>
            <person name="Wortman J.R."/>
            <person name="Jordar V.S."/>
            <person name="Maiti R."/>
            <person name="Kodira C.D."/>
            <person name="Neafsey D.E."/>
            <person name="Zeng Q."/>
            <person name="Hung C.-Y."/>
            <person name="McMahan C."/>
            <person name="Muszewska A."/>
            <person name="Grynberg M."/>
            <person name="Mandel M.A."/>
            <person name="Kellner E.M."/>
            <person name="Barker B.M."/>
            <person name="Galgiani J.N."/>
            <person name="Orbach M.J."/>
            <person name="Kirkland T.N."/>
            <person name="Cole G.T."/>
            <person name="Henn M.R."/>
            <person name="Birren B.W."/>
            <person name="Taylor J.W."/>
        </authorList>
    </citation>
    <scope>NUCLEOTIDE SEQUENCE [LARGE SCALE GENOMIC DNA]</scope>
    <source>
        <strain>RS</strain>
    </source>
</reference>
<reference key="2">
    <citation type="journal article" date="2010" name="Genome Res.">
        <title>Population genomic sequencing of Coccidioides fungi reveals recent hybridization and transposon control.</title>
        <authorList>
            <person name="Neafsey D.E."/>
            <person name="Barker B.M."/>
            <person name="Sharpton T.J."/>
            <person name="Stajich J.E."/>
            <person name="Park D.J."/>
            <person name="Whiston E."/>
            <person name="Hung C.-Y."/>
            <person name="McMahan C."/>
            <person name="White J."/>
            <person name="Sykes S."/>
            <person name="Heiman D."/>
            <person name="Young S."/>
            <person name="Zeng Q."/>
            <person name="Abouelleil A."/>
            <person name="Aftuck L."/>
            <person name="Bessette D."/>
            <person name="Brown A."/>
            <person name="FitzGerald M."/>
            <person name="Lui A."/>
            <person name="Macdonald J.P."/>
            <person name="Priest M."/>
            <person name="Orbach M.J."/>
            <person name="Galgiani J.N."/>
            <person name="Kirkland T.N."/>
            <person name="Cole G.T."/>
            <person name="Birren B.W."/>
            <person name="Henn M.R."/>
            <person name="Taylor J.W."/>
            <person name="Rounsley S.D."/>
        </authorList>
    </citation>
    <scope>GENOME REANNOTATION</scope>
    <source>
        <strain>RS</strain>
    </source>
</reference>
<organism>
    <name type="scientific">Coccidioides immitis (strain RS)</name>
    <name type="common">Valley fever fungus</name>
    <dbReference type="NCBI Taxonomy" id="246410"/>
    <lineage>
        <taxon>Eukaryota</taxon>
        <taxon>Fungi</taxon>
        <taxon>Dikarya</taxon>
        <taxon>Ascomycota</taxon>
        <taxon>Pezizomycotina</taxon>
        <taxon>Eurotiomycetes</taxon>
        <taxon>Eurotiomycetidae</taxon>
        <taxon>Onygenales</taxon>
        <taxon>Onygenaceae</taxon>
        <taxon>Coccidioides</taxon>
    </lineage>
</organism>